<protein>
    <recommendedName>
        <fullName evidence="3">Probable cinnamyl alcohol dehydrogenase 3</fullName>
        <shortName evidence="2">OsCAD3</shortName>
        <ecNumber evidence="1">1.1.1.195</ecNumber>
    </recommendedName>
</protein>
<name>CADH3_ORYSJ</name>
<dbReference type="EC" id="1.1.1.195" evidence="1"/>
<dbReference type="EMBL" id="DP000086">
    <property type="protein sequence ID" value="ABB47655.1"/>
    <property type="molecule type" value="Genomic_DNA"/>
</dbReference>
<dbReference type="EMBL" id="AP008216">
    <property type="protein sequence ID" value="BAF26573.2"/>
    <property type="molecule type" value="Genomic_DNA"/>
</dbReference>
<dbReference type="EMBL" id="AP014966">
    <property type="protein sequence ID" value="BAT10947.1"/>
    <property type="molecule type" value="Genomic_DNA"/>
</dbReference>
<dbReference type="EMBL" id="CM000147">
    <property type="protein sequence ID" value="EAZ16157.1"/>
    <property type="molecule type" value="Genomic_DNA"/>
</dbReference>
<dbReference type="EMBL" id="AK069040">
    <property type="protein sequence ID" value="BAG91230.1"/>
    <property type="molecule type" value="mRNA"/>
</dbReference>
<dbReference type="EMBL" id="AK099176">
    <property type="protein sequence ID" value="BAG93975.1"/>
    <property type="molecule type" value="mRNA"/>
</dbReference>
<dbReference type="RefSeq" id="XP_015613064.1">
    <property type="nucleotide sequence ID" value="XM_015757578.1"/>
</dbReference>
<dbReference type="SMR" id="Q337Y2"/>
<dbReference type="FunCoup" id="Q337Y2">
    <property type="interactions" value="176"/>
</dbReference>
<dbReference type="STRING" id="39947.Q337Y2"/>
<dbReference type="PaxDb" id="39947-Q337Y2"/>
<dbReference type="EnsemblPlants" id="Os10t0430200-01">
    <property type="protein sequence ID" value="Os10t0430200-01"/>
    <property type="gene ID" value="Os10g0430200"/>
</dbReference>
<dbReference type="EnsemblPlants" id="Os10t0430200-02">
    <property type="protein sequence ID" value="Os10t0430200-02"/>
    <property type="gene ID" value="Os10g0430200"/>
</dbReference>
<dbReference type="EnsemblPlants" id="Os10t0430200-03">
    <property type="protein sequence ID" value="Os10t0430200-03"/>
    <property type="gene ID" value="Os10g0430200"/>
</dbReference>
<dbReference type="Gramene" id="Os10t0430200-01">
    <property type="protein sequence ID" value="Os10t0430200-01"/>
    <property type="gene ID" value="Os10g0430200"/>
</dbReference>
<dbReference type="Gramene" id="Os10t0430200-02">
    <property type="protein sequence ID" value="Os10t0430200-02"/>
    <property type="gene ID" value="Os10g0430200"/>
</dbReference>
<dbReference type="Gramene" id="Os10t0430200-03">
    <property type="protein sequence ID" value="Os10t0430200-03"/>
    <property type="gene ID" value="Os10g0430200"/>
</dbReference>
<dbReference type="KEGG" id="dosa:Os10g0430200"/>
<dbReference type="eggNOG" id="KOG0023">
    <property type="taxonomic scope" value="Eukaryota"/>
</dbReference>
<dbReference type="HOGENOM" id="CLU_026673_20_2_1"/>
<dbReference type="InParanoid" id="Q337Y2"/>
<dbReference type="OMA" id="EAIFPMV"/>
<dbReference type="OrthoDB" id="1879366at2759"/>
<dbReference type="UniPathway" id="UPA00711"/>
<dbReference type="Proteomes" id="UP000000763">
    <property type="component" value="Chromosome 10"/>
</dbReference>
<dbReference type="Proteomes" id="UP000007752">
    <property type="component" value="Chromosome 10"/>
</dbReference>
<dbReference type="Proteomes" id="UP000059680">
    <property type="component" value="Chromosome 10"/>
</dbReference>
<dbReference type="GO" id="GO:0045551">
    <property type="term" value="F:cinnamyl-alcohol dehydrogenase activity"/>
    <property type="evidence" value="ECO:0000318"/>
    <property type="project" value="GO_Central"/>
</dbReference>
<dbReference type="GO" id="GO:0050268">
    <property type="term" value="F:coniferyl-alcohol dehydrogenase activity"/>
    <property type="evidence" value="ECO:0007669"/>
    <property type="project" value="RHEA"/>
</dbReference>
<dbReference type="GO" id="GO:0008270">
    <property type="term" value="F:zinc ion binding"/>
    <property type="evidence" value="ECO:0007669"/>
    <property type="project" value="InterPro"/>
</dbReference>
<dbReference type="GO" id="GO:0009809">
    <property type="term" value="P:lignin biosynthetic process"/>
    <property type="evidence" value="ECO:0000318"/>
    <property type="project" value="GO_Central"/>
</dbReference>
<dbReference type="CDD" id="cd05283">
    <property type="entry name" value="CAD1"/>
    <property type="match status" value="1"/>
</dbReference>
<dbReference type="FunFam" id="3.40.50.720:FF:000022">
    <property type="entry name" value="Cinnamyl alcohol dehydrogenase"/>
    <property type="match status" value="1"/>
</dbReference>
<dbReference type="FunFam" id="3.90.180.10:FF:000004">
    <property type="entry name" value="probable cinnamyl alcohol dehydrogenase"/>
    <property type="match status" value="1"/>
</dbReference>
<dbReference type="Gene3D" id="3.90.180.10">
    <property type="entry name" value="Medium-chain alcohol dehydrogenases, catalytic domain"/>
    <property type="match status" value="1"/>
</dbReference>
<dbReference type="Gene3D" id="3.40.50.720">
    <property type="entry name" value="NAD(P)-binding Rossmann-like Domain"/>
    <property type="match status" value="1"/>
</dbReference>
<dbReference type="InterPro" id="IPR013149">
    <property type="entry name" value="ADH-like_C"/>
</dbReference>
<dbReference type="InterPro" id="IPR013154">
    <property type="entry name" value="ADH-like_N"/>
</dbReference>
<dbReference type="InterPro" id="IPR002328">
    <property type="entry name" value="ADH_Zn_CS"/>
</dbReference>
<dbReference type="InterPro" id="IPR047109">
    <property type="entry name" value="CAD-like"/>
</dbReference>
<dbReference type="InterPro" id="IPR011032">
    <property type="entry name" value="GroES-like_sf"/>
</dbReference>
<dbReference type="InterPro" id="IPR036291">
    <property type="entry name" value="NAD(P)-bd_dom_sf"/>
</dbReference>
<dbReference type="InterPro" id="IPR020843">
    <property type="entry name" value="PKS_ER"/>
</dbReference>
<dbReference type="PANTHER" id="PTHR42683">
    <property type="entry name" value="ALDEHYDE REDUCTASE"/>
    <property type="match status" value="1"/>
</dbReference>
<dbReference type="Pfam" id="PF08240">
    <property type="entry name" value="ADH_N"/>
    <property type="match status" value="1"/>
</dbReference>
<dbReference type="Pfam" id="PF00107">
    <property type="entry name" value="ADH_zinc_N"/>
    <property type="match status" value="1"/>
</dbReference>
<dbReference type="SMART" id="SM00829">
    <property type="entry name" value="PKS_ER"/>
    <property type="match status" value="1"/>
</dbReference>
<dbReference type="SUPFAM" id="SSF50129">
    <property type="entry name" value="GroES-like"/>
    <property type="match status" value="1"/>
</dbReference>
<dbReference type="SUPFAM" id="SSF51735">
    <property type="entry name" value="NAD(P)-binding Rossmann-fold domains"/>
    <property type="match status" value="1"/>
</dbReference>
<dbReference type="PROSITE" id="PS00059">
    <property type="entry name" value="ADH_ZINC"/>
    <property type="match status" value="1"/>
</dbReference>
<gene>
    <name evidence="2" type="primary">CAD3</name>
    <name type="ordered locus">Os10g0430200</name>
    <name type="ordered locus">LOC_Os10g29470</name>
    <name type="ORF">OsJ_31603</name>
</gene>
<feature type="chain" id="PRO_0000382642" description="Probable cinnamyl alcohol dehydrogenase 3">
    <location>
        <begin position="1"/>
        <end position="366"/>
    </location>
</feature>
<feature type="binding site" evidence="1">
    <location>
        <position position="53"/>
    </location>
    <ligand>
        <name>Zn(2+)</name>
        <dbReference type="ChEBI" id="CHEBI:29105"/>
        <label>1</label>
        <note>catalytic</note>
    </ligand>
</feature>
<feature type="binding site" evidence="1">
    <location>
        <position position="55"/>
    </location>
    <ligand>
        <name>NADP(+)</name>
        <dbReference type="ChEBI" id="CHEBI:58349"/>
    </ligand>
</feature>
<feature type="binding site" evidence="1">
    <location>
        <position position="75"/>
    </location>
    <ligand>
        <name>Zn(2+)</name>
        <dbReference type="ChEBI" id="CHEBI:29105"/>
        <label>1</label>
        <note>catalytic</note>
    </ligand>
</feature>
<feature type="binding site" evidence="1">
    <location>
        <position position="76"/>
    </location>
    <ligand>
        <name>Zn(2+)</name>
        <dbReference type="ChEBI" id="CHEBI:29105"/>
        <label>1</label>
        <note>catalytic</note>
    </ligand>
</feature>
<feature type="binding site" evidence="1">
    <location>
        <position position="106"/>
    </location>
    <ligand>
        <name>Zn(2+)</name>
        <dbReference type="ChEBI" id="CHEBI:29105"/>
        <label>2</label>
    </ligand>
</feature>
<feature type="binding site" evidence="1">
    <location>
        <position position="109"/>
    </location>
    <ligand>
        <name>Zn(2+)</name>
        <dbReference type="ChEBI" id="CHEBI:29105"/>
        <label>2</label>
    </ligand>
</feature>
<feature type="binding site" evidence="1">
    <location>
        <position position="112"/>
    </location>
    <ligand>
        <name>Zn(2+)</name>
        <dbReference type="ChEBI" id="CHEBI:29105"/>
        <label>2</label>
    </ligand>
</feature>
<feature type="binding site" evidence="1">
    <location>
        <position position="120"/>
    </location>
    <ligand>
        <name>Zn(2+)</name>
        <dbReference type="ChEBI" id="CHEBI:29105"/>
        <label>2</label>
    </ligand>
</feature>
<feature type="binding site" evidence="1">
    <location>
        <position position="169"/>
    </location>
    <ligand>
        <name>Zn(2+)</name>
        <dbReference type="ChEBI" id="CHEBI:29105"/>
        <label>1</label>
        <note>catalytic</note>
    </ligand>
</feature>
<feature type="binding site" evidence="1">
    <location>
        <position position="173"/>
    </location>
    <ligand>
        <name>NADP(+)</name>
        <dbReference type="ChEBI" id="CHEBI:58349"/>
    </ligand>
</feature>
<feature type="binding site" evidence="1">
    <location>
        <begin position="194"/>
        <end position="199"/>
    </location>
    <ligand>
        <name>NADP(+)</name>
        <dbReference type="ChEBI" id="CHEBI:58349"/>
    </ligand>
</feature>
<feature type="binding site" evidence="1">
    <location>
        <begin position="217"/>
        <end position="222"/>
    </location>
    <ligand>
        <name>NADP(+)</name>
        <dbReference type="ChEBI" id="CHEBI:58349"/>
    </ligand>
</feature>
<feature type="binding site" evidence="1">
    <location>
        <position position="257"/>
    </location>
    <ligand>
        <name>NADP(+)</name>
        <dbReference type="ChEBI" id="CHEBI:58349"/>
    </ligand>
</feature>
<feature type="binding site" evidence="1">
    <location>
        <position position="281"/>
    </location>
    <ligand>
        <name>NADP(+)</name>
        <dbReference type="ChEBI" id="CHEBI:58349"/>
    </ligand>
</feature>
<feature type="binding site" evidence="1">
    <location>
        <begin position="304"/>
        <end position="306"/>
    </location>
    <ligand>
        <name>NADP(+)</name>
        <dbReference type="ChEBI" id="CHEBI:58349"/>
    </ligand>
</feature>
<evidence type="ECO:0000250" key="1">
    <source>
        <dbReference type="UniProtKB" id="O49482"/>
    </source>
</evidence>
<evidence type="ECO:0000303" key="2">
    <source>
    </source>
</evidence>
<evidence type="ECO:0000305" key="3"/>
<reference key="1">
    <citation type="journal article" date="2003" name="Science">
        <title>In-depth view of structure, activity, and evolution of rice chromosome 10.</title>
        <authorList>
            <person name="Yu Y."/>
            <person name="Rambo T."/>
            <person name="Currie J."/>
            <person name="Saski C."/>
            <person name="Kim H.-R."/>
            <person name="Collura K."/>
            <person name="Thompson S."/>
            <person name="Simmons J."/>
            <person name="Yang T.-J."/>
            <person name="Nah G."/>
            <person name="Patel A.J."/>
            <person name="Thurmond S."/>
            <person name="Henry D."/>
            <person name="Oates R."/>
            <person name="Palmer M."/>
            <person name="Pries G."/>
            <person name="Gibson J."/>
            <person name="Anderson H."/>
            <person name="Paradkar M."/>
            <person name="Crane L."/>
            <person name="Dale J."/>
            <person name="Carver M.B."/>
            <person name="Wood T."/>
            <person name="Frisch D."/>
            <person name="Engler F."/>
            <person name="Soderlund C."/>
            <person name="Palmer L.E."/>
            <person name="Teytelman L."/>
            <person name="Nascimento L."/>
            <person name="De la Bastide M."/>
            <person name="Spiegel L."/>
            <person name="Ware D."/>
            <person name="O'Shaughnessy A."/>
            <person name="Dike S."/>
            <person name="Dedhia N."/>
            <person name="Preston R."/>
            <person name="Huang E."/>
            <person name="Ferraro K."/>
            <person name="Kuit K."/>
            <person name="Miller B."/>
            <person name="Zutavern T."/>
            <person name="Katzenberger F."/>
            <person name="Muller S."/>
            <person name="Balija V."/>
            <person name="Martienssen R.A."/>
            <person name="Stein L."/>
            <person name="Minx P."/>
            <person name="Johnson D."/>
            <person name="Cordum H."/>
            <person name="Mardis E."/>
            <person name="Cheng Z."/>
            <person name="Jiang J."/>
            <person name="Wilson R."/>
            <person name="McCombie W.R."/>
            <person name="Wing R.A."/>
            <person name="Yuan Q."/>
            <person name="Ouyang S."/>
            <person name="Liu J."/>
            <person name="Jones K.M."/>
            <person name="Gansberger K."/>
            <person name="Moffat K."/>
            <person name="Hill J."/>
            <person name="Tsitrin T."/>
            <person name="Overton L."/>
            <person name="Bera J."/>
            <person name="Kim M."/>
            <person name="Jin S."/>
            <person name="Tallon L."/>
            <person name="Ciecko A."/>
            <person name="Pai G."/>
            <person name="Van Aken S."/>
            <person name="Utterback T."/>
            <person name="Reidmuller S."/>
            <person name="Bormann J."/>
            <person name="Feldblyum T."/>
            <person name="Hsiao J."/>
            <person name="Zismann V."/>
            <person name="Blunt S."/>
            <person name="de Vazeille A.R."/>
            <person name="Shaffer T."/>
            <person name="Koo H."/>
            <person name="Suh B."/>
            <person name="Yang Q."/>
            <person name="Haas B."/>
            <person name="Peterson J."/>
            <person name="Pertea M."/>
            <person name="Volfovsky N."/>
            <person name="Wortman J."/>
            <person name="White O."/>
            <person name="Salzberg S.L."/>
            <person name="Fraser C.M."/>
            <person name="Buell C.R."/>
            <person name="Messing J."/>
            <person name="Song R."/>
            <person name="Fuks G."/>
            <person name="Llaca V."/>
            <person name="Kovchak S."/>
            <person name="Young S."/>
            <person name="Bowers J.E."/>
            <person name="Paterson A.H."/>
            <person name="Johns M.A."/>
            <person name="Mao L."/>
            <person name="Pan H."/>
            <person name="Dean R.A."/>
        </authorList>
    </citation>
    <scope>NUCLEOTIDE SEQUENCE [LARGE SCALE GENOMIC DNA]</scope>
    <source>
        <strain>cv. Nipponbare</strain>
    </source>
</reference>
<reference key="2">
    <citation type="journal article" date="2005" name="Nature">
        <title>The map-based sequence of the rice genome.</title>
        <authorList>
            <consortium name="International rice genome sequencing project (IRGSP)"/>
        </authorList>
    </citation>
    <scope>NUCLEOTIDE SEQUENCE [LARGE SCALE GENOMIC DNA]</scope>
    <source>
        <strain>cv. Nipponbare</strain>
    </source>
</reference>
<reference key="3">
    <citation type="journal article" date="2008" name="Nucleic Acids Res.">
        <title>The rice annotation project database (RAP-DB): 2008 update.</title>
        <authorList>
            <consortium name="The rice annotation project (RAP)"/>
        </authorList>
    </citation>
    <scope>GENOME REANNOTATION</scope>
    <source>
        <strain>cv. Nipponbare</strain>
    </source>
</reference>
<reference key="4">
    <citation type="journal article" date="2013" name="Rice">
        <title>Improvement of the Oryza sativa Nipponbare reference genome using next generation sequence and optical map data.</title>
        <authorList>
            <person name="Kawahara Y."/>
            <person name="de la Bastide M."/>
            <person name="Hamilton J.P."/>
            <person name="Kanamori H."/>
            <person name="McCombie W.R."/>
            <person name="Ouyang S."/>
            <person name="Schwartz D.C."/>
            <person name="Tanaka T."/>
            <person name="Wu J."/>
            <person name="Zhou S."/>
            <person name="Childs K.L."/>
            <person name="Davidson R.M."/>
            <person name="Lin H."/>
            <person name="Quesada-Ocampo L."/>
            <person name="Vaillancourt B."/>
            <person name="Sakai H."/>
            <person name="Lee S.S."/>
            <person name="Kim J."/>
            <person name="Numa H."/>
            <person name="Itoh T."/>
            <person name="Buell C.R."/>
            <person name="Matsumoto T."/>
        </authorList>
    </citation>
    <scope>GENOME REANNOTATION</scope>
    <source>
        <strain>cv. Nipponbare</strain>
    </source>
</reference>
<reference key="5">
    <citation type="journal article" date="2005" name="PLoS Biol.">
        <title>The genomes of Oryza sativa: a history of duplications.</title>
        <authorList>
            <person name="Yu J."/>
            <person name="Wang J."/>
            <person name="Lin W."/>
            <person name="Li S."/>
            <person name="Li H."/>
            <person name="Zhou J."/>
            <person name="Ni P."/>
            <person name="Dong W."/>
            <person name="Hu S."/>
            <person name="Zeng C."/>
            <person name="Zhang J."/>
            <person name="Zhang Y."/>
            <person name="Li R."/>
            <person name="Xu Z."/>
            <person name="Li S."/>
            <person name="Li X."/>
            <person name="Zheng H."/>
            <person name="Cong L."/>
            <person name="Lin L."/>
            <person name="Yin J."/>
            <person name="Geng J."/>
            <person name="Li G."/>
            <person name="Shi J."/>
            <person name="Liu J."/>
            <person name="Lv H."/>
            <person name="Li J."/>
            <person name="Wang J."/>
            <person name="Deng Y."/>
            <person name="Ran L."/>
            <person name="Shi X."/>
            <person name="Wang X."/>
            <person name="Wu Q."/>
            <person name="Li C."/>
            <person name="Ren X."/>
            <person name="Wang J."/>
            <person name="Wang X."/>
            <person name="Li D."/>
            <person name="Liu D."/>
            <person name="Zhang X."/>
            <person name="Ji Z."/>
            <person name="Zhao W."/>
            <person name="Sun Y."/>
            <person name="Zhang Z."/>
            <person name="Bao J."/>
            <person name="Han Y."/>
            <person name="Dong L."/>
            <person name="Ji J."/>
            <person name="Chen P."/>
            <person name="Wu S."/>
            <person name="Liu J."/>
            <person name="Xiao Y."/>
            <person name="Bu D."/>
            <person name="Tan J."/>
            <person name="Yang L."/>
            <person name="Ye C."/>
            <person name="Zhang J."/>
            <person name="Xu J."/>
            <person name="Zhou Y."/>
            <person name="Yu Y."/>
            <person name="Zhang B."/>
            <person name="Zhuang S."/>
            <person name="Wei H."/>
            <person name="Liu B."/>
            <person name="Lei M."/>
            <person name="Yu H."/>
            <person name="Li Y."/>
            <person name="Xu H."/>
            <person name="Wei S."/>
            <person name="He X."/>
            <person name="Fang L."/>
            <person name="Zhang Z."/>
            <person name="Zhang Y."/>
            <person name="Huang X."/>
            <person name="Su Z."/>
            <person name="Tong W."/>
            <person name="Li J."/>
            <person name="Tong Z."/>
            <person name="Li S."/>
            <person name="Ye J."/>
            <person name="Wang L."/>
            <person name="Fang L."/>
            <person name="Lei T."/>
            <person name="Chen C.-S."/>
            <person name="Chen H.-C."/>
            <person name="Xu Z."/>
            <person name="Li H."/>
            <person name="Huang H."/>
            <person name="Zhang F."/>
            <person name="Xu H."/>
            <person name="Li N."/>
            <person name="Zhao C."/>
            <person name="Li S."/>
            <person name="Dong L."/>
            <person name="Huang Y."/>
            <person name="Li L."/>
            <person name="Xi Y."/>
            <person name="Qi Q."/>
            <person name="Li W."/>
            <person name="Zhang B."/>
            <person name="Hu W."/>
            <person name="Zhang Y."/>
            <person name="Tian X."/>
            <person name="Jiao Y."/>
            <person name="Liang X."/>
            <person name="Jin J."/>
            <person name="Gao L."/>
            <person name="Zheng W."/>
            <person name="Hao B."/>
            <person name="Liu S.-M."/>
            <person name="Wang W."/>
            <person name="Yuan L."/>
            <person name="Cao M."/>
            <person name="McDermott J."/>
            <person name="Samudrala R."/>
            <person name="Wang J."/>
            <person name="Wong G.K.-S."/>
            <person name="Yang H."/>
        </authorList>
    </citation>
    <scope>NUCLEOTIDE SEQUENCE [LARGE SCALE GENOMIC DNA]</scope>
    <source>
        <strain>cv. Nipponbare</strain>
    </source>
</reference>
<reference key="6">
    <citation type="journal article" date="2003" name="Science">
        <title>Collection, mapping, and annotation of over 28,000 cDNA clones from japonica rice.</title>
        <authorList>
            <consortium name="The rice full-length cDNA consortium"/>
        </authorList>
    </citation>
    <scope>NUCLEOTIDE SEQUENCE [LARGE SCALE MRNA]</scope>
    <source>
        <strain>cv. Nipponbare</strain>
    </source>
</reference>
<reference key="7">
    <citation type="journal article" date="2005" name="Planta">
        <title>Structure of the cinnamyl-alcohol dehydrogenase gene family in rice and promoter activity of a member associated with lignification.</title>
        <authorList>
            <person name="Tobias C.M."/>
            <person name="Chow E.K."/>
        </authorList>
    </citation>
    <scope>GENE FAMILY</scope>
    <scope>NOMENCLATURE</scope>
</reference>
<organism>
    <name type="scientific">Oryza sativa subsp. japonica</name>
    <name type="common">Rice</name>
    <dbReference type="NCBI Taxonomy" id="39947"/>
    <lineage>
        <taxon>Eukaryota</taxon>
        <taxon>Viridiplantae</taxon>
        <taxon>Streptophyta</taxon>
        <taxon>Embryophyta</taxon>
        <taxon>Tracheophyta</taxon>
        <taxon>Spermatophyta</taxon>
        <taxon>Magnoliopsida</taxon>
        <taxon>Liliopsida</taxon>
        <taxon>Poales</taxon>
        <taxon>Poaceae</taxon>
        <taxon>BOP clade</taxon>
        <taxon>Oryzoideae</taxon>
        <taxon>Oryzeae</taxon>
        <taxon>Oryzinae</taxon>
        <taxon>Oryza</taxon>
        <taxon>Oryza sativa</taxon>
    </lineage>
</organism>
<sequence length="366" mass="38523">MAPTAASAAAGEEQQAVGLAARDSSGHLSPFAISRRSTGDDDVAIKILFCGICHSDLHCIKNEWKHSIYPLVPGHEIAGVVTEVGKNVTRFKAGDRVGVGCMVNSCRSCESCNNGFENHCPEGVFTYNSVDKDGTVTYGGYSSMVVVHERFVVMFPEAMPLDVGAPLLCAGITVYTPMKYHGLNAPGKHVGVLGLGGLGHVAVKFARAFGLKVTVISSSPGKKREALERLGADAFVVSSSAEEMEAARSTMDGVINTVSANTPMAPYLALLKPNGKMILVGLPENPLEVPPFSLVHGNRTLAGSNIGGMADTQEMIELAAKHGVTADIEVIGADDVNTAMERLAKADVRYRFVIDVGNTLHAAAAE</sequence>
<comment type="function">
    <text evidence="1">Involved in lignin biosynthesis. Catalyzes the final step specific for the production of lignin monomers. Catalyzes the NADPH-dependent reduction of coniferaldehyde, 5-hydroxyconiferaldehyde, sinapaldehyde, 4-coumaraldehyde and caffeyl aldehyde to their respective alcohols.</text>
</comment>
<comment type="catalytic activity">
    <reaction evidence="1">
        <text>(E)-cinnamyl alcohol + NADP(+) = (E)-cinnamaldehyde + NADPH + H(+)</text>
        <dbReference type="Rhea" id="RHEA:10392"/>
        <dbReference type="ChEBI" id="CHEBI:15378"/>
        <dbReference type="ChEBI" id="CHEBI:16731"/>
        <dbReference type="ChEBI" id="CHEBI:33227"/>
        <dbReference type="ChEBI" id="CHEBI:57783"/>
        <dbReference type="ChEBI" id="CHEBI:58349"/>
        <dbReference type="EC" id="1.1.1.195"/>
    </reaction>
    <physiologicalReaction direction="right-to-left" evidence="1">
        <dbReference type="Rhea" id="RHEA:10394"/>
    </physiologicalReaction>
</comment>
<comment type="catalytic activity">
    <reaction evidence="1">
        <text>(E)-coniferol + NADP(+) = (E)-coniferaldehyde + NADPH + H(+)</text>
        <dbReference type="Rhea" id="RHEA:22444"/>
        <dbReference type="ChEBI" id="CHEBI:15378"/>
        <dbReference type="ChEBI" id="CHEBI:16547"/>
        <dbReference type="ChEBI" id="CHEBI:17745"/>
        <dbReference type="ChEBI" id="CHEBI:57783"/>
        <dbReference type="ChEBI" id="CHEBI:58349"/>
        <dbReference type="EC" id="1.1.1.195"/>
    </reaction>
    <physiologicalReaction direction="right-to-left" evidence="1">
        <dbReference type="Rhea" id="RHEA:22446"/>
    </physiologicalReaction>
</comment>
<comment type="catalytic activity">
    <reaction evidence="1">
        <text>(E)-sinapyl alcohol + NADP(+) = (E)-sinapaldehyde + NADPH + H(+)</text>
        <dbReference type="Rhea" id="RHEA:45704"/>
        <dbReference type="ChEBI" id="CHEBI:15378"/>
        <dbReference type="ChEBI" id="CHEBI:27949"/>
        <dbReference type="ChEBI" id="CHEBI:57783"/>
        <dbReference type="ChEBI" id="CHEBI:58349"/>
        <dbReference type="ChEBI" id="CHEBI:64557"/>
        <dbReference type="EC" id="1.1.1.195"/>
    </reaction>
    <physiologicalReaction direction="right-to-left" evidence="1">
        <dbReference type="Rhea" id="RHEA:45706"/>
    </physiologicalReaction>
</comment>
<comment type="catalytic activity">
    <reaction evidence="1">
        <text>(E)-4-coumaroyl alcohol + NADP(+) = (E)-4-coumaraldehyde + NADPH + H(+)</text>
        <dbReference type="Rhea" id="RHEA:45724"/>
        <dbReference type="ChEBI" id="CHEBI:15378"/>
        <dbReference type="ChEBI" id="CHEBI:28353"/>
        <dbReference type="ChEBI" id="CHEBI:57783"/>
        <dbReference type="ChEBI" id="CHEBI:58349"/>
        <dbReference type="ChEBI" id="CHEBI:64555"/>
        <dbReference type="EC" id="1.1.1.195"/>
    </reaction>
    <physiologicalReaction direction="right-to-left" evidence="1">
        <dbReference type="Rhea" id="RHEA:45726"/>
    </physiologicalReaction>
</comment>
<comment type="catalytic activity">
    <reaction evidence="1">
        <text>(E)-caffeyl alcohol + NADP(+) = (E)-caffeyl aldehyde + NADPH + H(+)</text>
        <dbReference type="Rhea" id="RHEA:45728"/>
        <dbReference type="ChEBI" id="CHEBI:15378"/>
        <dbReference type="ChEBI" id="CHEBI:28323"/>
        <dbReference type="ChEBI" id="CHEBI:31334"/>
        <dbReference type="ChEBI" id="CHEBI:57783"/>
        <dbReference type="ChEBI" id="CHEBI:58349"/>
    </reaction>
    <physiologicalReaction direction="right-to-left" evidence="1">
        <dbReference type="Rhea" id="RHEA:45730"/>
    </physiologicalReaction>
</comment>
<comment type="cofactor">
    <cofactor evidence="1">
        <name>Zn(2+)</name>
        <dbReference type="ChEBI" id="CHEBI:29105"/>
    </cofactor>
    <text evidence="1">Binds 2 Zn(2+) ions per subunit.</text>
</comment>
<comment type="pathway">
    <text evidence="1">Aromatic compound metabolism; phenylpropanoid biosynthesis.</text>
</comment>
<comment type="subunit">
    <text evidence="1">Homodimer.</text>
</comment>
<comment type="similarity">
    <text evidence="3">Belongs to the zinc-containing alcohol dehydrogenase family.</text>
</comment>
<accession>Q337Y2</accession>
<accession>A0A0P0XUG5</accession>
<accession>Q0IXJ2</accession>
<proteinExistence type="evidence at transcript level"/>
<keyword id="KW-0438">Lignin biosynthesis</keyword>
<keyword id="KW-0479">Metal-binding</keyword>
<keyword id="KW-0521">NADP</keyword>
<keyword id="KW-0560">Oxidoreductase</keyword>
<keyword id="KW-1185">Reference proteome</keyword>
<keyword id="KW-0862">Zinc</keyword>